<comment type="function">
    <text evidence="2">One of the essential components for the initiation of protein synthesis. Protects formylmethionyl-tRNA from spontaneous hydrolysis and promotes its binding to the 30S ribosomal subunits. Also involved in the hydrolysis of GTP during the formation of the 70S ribosomal complex.</text>
</comment>
<comment type="subcellular location">
    <subcellularLocation>
        <location evidence="2">Cytoplasm</location>
    </subcellularLocation>
</comment>
<comment type="similarity">
    <text evidence="2">Belongs to the TRAFAC class translation factor GTPase superfamily. Classic translation factor GTPase family. IF-2 subfamily.</text>
</comment>
<accession>C1CQ48</accession>
<gene>
    <name evidence="2" type="primary">infB</name>
    <name type="ordered locus">SPT_0586</name>
</gene>
<proteinExistence type="inferred from homology"/>
<name>IF2_STRZT</name>
<keyword id="KW-0963">Cytoplasm</keyword>
<keyword id="KW-0342">GTP-binding</keyword>
<keyword id="KW-0396">Initiation factor</keyword>
<keyword id="KW-0547">Nucleotide-binding</keyword>
<keyword id="KW-0648">Protein biosynthesis</keyword>
<evidence type="ECO:0000250" key="1"/>
<evidence type="ECO:0000255" key="2">
    <source>
        <dbReference type="HAMAP-Rule" id="MF_00100"/>
    </source>
</evidence>
<evidence type="ECO:0000256" key="3">
    <source>
        <dbReference type="SAM" id="MobiDB-lite"/>
    </source>
</evidence>
<reference key="1">
    <citation type="journal article" date="2010" name="Genome Biol.">
        <title>Structure and dynamics of the pan-genome of Streptococcus pneumoniae and closely related species.</title>
        <authorList>
            <person name="Donati C."/>
            <person name="Hiller N.L."/>
            <person name="Tettelin H."/>
            <person name="Muzzi A."/>
            <person name="Croucher N.J."/>
            <person name="Angiuoli S.V."/>
            <person name="Oggioni M."/>
            <person name="Dunning Hotopp J.C."/>
            <person name="Hu F.Z."/>
            <person name="Riley D.R."/>
            <person name="Covacci A."/>
            <person name="Mitchell T.J."/>
            <person name="Bentley S.D."/>
            <person name="Kilian M."/>
            <person name="Ehrlich G.D."/>
            <person name="Rappuoli R."/>
            <person name="Moxon E.R."/>
            <person name="Masignani V."/>
        </authorList>
    </citation>
    <scope>NUCLEOTIDE SEQUENCE [LARGE SCALE GENOMIC DNA]</scope>
    <source>
        <strain>Taiwan19F-14</strain>
    </source>
</reference>
<dbReference type="EMBL" id="CP000921">
    <property type="protein sequence ID" value="ACO22666.1"/>
    <property type="molecule type" value="Genomic_DNA"/>
</dbReference>
<dbReference type="RefSeq" id="WP_000039202.1">
    <property type="nucleotide sequence ID" value="NC_012469.1"/>
</dbReference>
<dbReference type="SMR" id="C1CQ48"/>
<dbReference type="KEGG" id="snt:SPT_0586"/>
<dbReference type="HOGENOM" id="CLU_006301_5_0_9"/>
<dbReference type="GO" id="GO:0005829">
    <property type="term" value="C:cytosol"/>
    <property type="evidence" value="ECO:0007669"/>
    <property type="project" value="TreeGrafter"/>
</dbReference>
<dbReference type="GO" id="GO:0005525">
    <property type="term" value="F:GTP binding"/>
    <property type="evidence" value="ECO:0007669"/>
    <property type="project" value="UniProtKB-KW"/>
</dbReference>
<dbReference type="GO" id="GO:0003924">
    <property type="term" value="F:GTPase activity"/>
    <property type="evidence" value="ECO:0007669"/>
    <property type="project" value="UniProtKB-UniRule"/>
</dbReference>
<dbReference type="GO" id="GO:0003743">
    <property type="term" value="F:translation initiation factor activity"/>
    <property type="evidence" value="ECO:0007669"/>
    <property type="project" value="UniProtKB-UniRule"/>
</dbReference>
<dbReference type="CDD" id="cd01887">
    <property type="entry name" value="IF2_eIF5B"/>
    <property type="match status" value="1"/>
</dbReference>
<dbReference type="CDD" id="cd03702">
    <property type="entry name" value="IF2_mtIF2_II"/>
    <property type="match status" value="1"/>
</dbReference>
<dbReference type="CDD" id="cd03692">
    <property type="entry name" value="mtIF2_IVc"/>
    <property type="match status" value="1"/>
</dbReference>
<dbReference type="FunFam" id="1.10.10.2480:FF:000003">
    <property type="entry name" value="Translation initiation factor IF-2"/>
    <property type="match status" value="1"/>
</dbReference>
<dbReference type="FunFam" id="2.40.30.10:FF:000007">
    <property type="entry name" value="Translation initiation factor IF-2"/>
    <property type="match status" value="1"/>
</dbReference>
<dbReference type="FunFam" id="2.40.30.10:FF:000008">
    <property type="entry name" value="Translation initiation factor IF-2"/>
    <property type="match status" value="1"/>
</dbReference>
<dbReference type="FunFam" id="3.40.50.10050:FF:000001">
    <property type="entry name" value="Translation initiation factor IF-2"/>
    <property type="match status" value="1"/>
</dbReference>
<dbReference type="FunFam" id="3.40.50.300:FF:000019">
    <property type="entry name" value="Translation initiation factor IF-2"/>
    <property type="match status" value="1"/>
</dbReference>
<dbReference type="Gene3D" id="1.10.10.2480">
    <property type="match status" value="1"/>
</dbReference>
<dbReference type="Gene3D" id="3.40.50.300">
    <property type="entry name" value="P-loop containing nucleotide triphosphate hydrolases"/>
    <property type="match status" value="1"/>
</dbReference>
<dbReference type="Gene3D" id="2.40.30.10">
    <property type="entry name" value="Translation factors"/>
    <property type="match status" value="2"/>
</dbReference>
<dbReference type="Gene3D" id="3.40.50.10050">
    <property type="entry name" value="Translation initiation factor IF- 2, domain 3"/>
    <property type="match status" value="1"/>
</dbReference>
<dbReference type="HAMAP" id="MF_00100_B">
    <property type="entry name" value="IF_2_B"/>
    <property type="match status" value="1"/>
</dbReference>
<dbReference type="InterPro" id="IPR053905">
    <property type="entry name" value="EF-G-like_DII"/>
</dbReference>
<dbReference type="InterPro" id="IPR044145">
    <property type="entry name" value="IF2_II"/>
</dbReference>
<dbReference type="InterPro" id="IPR006847">
    <property type="entry name" value="IF2_N"/>
</dbReference>
<dbReference type="InterPro" id="IPR027417">
    <property type="entry name" value="P-loop_NTPase"/>
</dbReference>
<dbReference type="InterPro" id="IPR005225">
    <property type="entry name" value="Small_GTP-bd"/>
</dbReference>
<dbReference type="InterPro" id="IPR000795">
    <property type="entry name" value="T_Tr_GTP-bd_dom"/>
</dbReference>
<dbReference type="InterPro" id="IPR000178">
    <property type="entry name" value="TF_IF2_bacterial-like"/>
</dbReference>
<dbReference type="InterPro" id="IPR015760">
    <property type="entry name" value="TIF_IF2"/>
</dbReference>
<dbReference type="InterPro" id="IPR023115">
    <property type="entry name" value="TIF_IF2_dom3"/>
</dbReference>
<dbReference type="InterPro" id="IPR036925">
    <property type="entry name" value="TIF_IF2_dom3_sf"/>
</dbReference>
<dbReference type="InterPro" id="IPR009000">
    <property type="entry name" value="Transl_B-barrel_sf"/>
</dbReference>
<dbReference type="NCBIfam" id="TIGR00487">
    <property type="entry name" value="IF-2"/>
    <property type="match status" value="1"/>
</dbReference>
<dbReference type="NCBIfam" id="TIGR00231">
    <property type="entry name" value="small_GTP"/>
    <property type="match status" value="1"/>
</dbReference>
<dbReference type="PANTHER" id="PTHR43381:SF5">
    <property type="entry name" value="TR-TYPE G DOMAIN-CONTAINING PROTEIN"/>
    <property type="match status" value="1"/>
</dbReference>
<dbReference type="PANTHER" id="PTHR43381">
    <property type="entry name" value="TRANSLATION INITIATION FACTOR IF-2-RELATED"/>
    <property type="match status" value="1"/>
</dbReference>
<dbReference type="Pfam" id="PF22042">
    <property type="entry name" value="EF-G_D2"/>
    <property type="match status" value="1"/>
</dbReference>
<dbReference type="Pfam" id="PF00009">
    <property type="entry name" value="GTP_EFTU"/>
    <property type="match status" value="1"/>
</dbReference>
<dbReference type="Pfam" id="PF11987">
    <property type="entry name" value="IF-2"/>
    <property type="match status" value="1"/>
</dbReference>
<dbReference type="Pfam" id="PF04760">
    <property type="entry name" value="IF2_N"/>
    <property type="match status" value="2"/>
</dbReference>
<dbReference type="SUPFAM" id="SSF52156">
    <property type="entry name" value="Initiation factor IF2/eIF5b, domain 3"/>
    <property type="match status" value="1"/>
</dbReference>
<dbReference type="SUPFAM" id="SSF52540">
    <property type="entry name" value="P-loop containing nucleoside triphosphate hydrolases"/>
    <property type="match status" value="1"/>
</dbReference>
<dbReference type="SUPFAM" id="SSF50447">
    <property type="entry name" value="Translation proteins"/>
    <property type="match status" value="2"/>
</dbReference>
<dbReference type="PROSITE" id="PS51722">
    <property type="entry name" value="G_TR_2"/>
    <property type="match status" value="1"/>
</dbReference>
<dbReference type="PROSITE" id="PS01176">
    <property type="entry name" value="IF2"/>
    <property type="match status" value="1"/>
</dbReference>
<protein>
    <recommendedName>
        <fullName evidence="2">Translation initiation factor IF-2</fullName>
    </recommendedName>
</protein>
<feature type="chain" id="PRO_1000190639" description="Translation initiation factor IF-2">
    <location>
        <begin position="1"/>
        <end position="930"/>
    </location>
</feature>
<feature type="domain" description="tr-type G">
    <location>
        <begin position="432"/>
        <end position="599"/>
    </location>
</feature>
<feature type="region of interest" description="Disordered" evidence="3">
    <location>
        <begin position="50"/>
        <end position="217"/>
    </location>
</feature>
<feature type="region of interest" description="Disordered" evidence="3">
    <location>
        <begin position="260"/>
        <end position="346"/>
    </location>
</feature>
<feature type="region of interest" description="G1" evidence="1">
    <location>
        <begin position="441"/>
        <end position="448"/>
    </location>
</feature>
<feature type="region of interest" description="G2" evidence="1">
    <location>
        <begin position="466"/>
        <end position="470"/>
    </location>
</feature>
<feature type="region of interest" description="G3" evidence="1">
    <location>
        <begin position="487"/>
        <end position="490"/>
    </location>
</feature>
<feature type="region of interest" description="G4" evidence="1">
    <location>
        <begin position="541"/>
        <end position="544"/>
    </location>
</feature>
<feature type="region of interest" description="G5" evidence="1">
    <location>
        <begin position="577"/>
        <end position="579"/>
    </location>
</feature>
<feature type="compositionally biased region" description="Low complexity" evidence="3">
    <location>
        <begin position="50"/>
        <end position="67"/>
    </location>
</feature>
<feature type="compositionally biased region" description="Basic and acidic residues" evidence="3">
    <location>
        <begin position="68"/>
        <end position="90"/>
    </location>
</feature>
<feature type="compositionally biased region" description="Basic and acidic residues" evidence="3">
    <location>
        <begin position="110"/>
        <end position="125"/>
    </location>
</feature>
<feature type="compositionally biased region" description="Low complexity" evidence="3">
    <location>
        <begin position="129"/>
        <end position="141"/>
    </location>
</feature>
<feature type="compositionally biased region" description="Basic and acidic residues" evidence="3">
    <location>
        <begin position="157"/>
        <end position="167"/>
    </location>
</feature>
<feature type="compositionally biased region" description="Basic and acidic residues" evidence="3">
    <location>
        <begin position="262"/>
        <end position="295"/>
    </location>
</feature>
<feature type="compositionally biased region" description="Low complexity" evidence="3">
    <location>
        <begin position="309"/>
        <end position="318"/>
    </location>
</feature>
<feature type="compositionally biased region" description="Basic and acidic residues" evidence="3">
    <location>
        <begin position="337"/>
        <end position="346"/>
    </location>
</feature>
<feature type="binding site" evidence="2">
    <location>
        <begin position="441"/>
        <end position="448"/>
    </location>
    <ligand>
        <name>GTP</name>
        <dbReference type="ChEBI" id="CHEBI:37565"/>
    </ligand>
</feature>
<feature type="binding site" evidence="2">
    <location>
        <begin position="487"/>
        <end position="491"/>
    </location>
    <ligand>
        <name>GTP</name>
        <dbReference type="ChEBI" id="CHEBI:37565"/>
    </ligand>
</feature>
<feature type="binding site" evidence="2">
    <location>
        <begin position="541"/>
        <end position="544"/>
    </location>
    <ligand>
        <name>GTP</name>
        <dbReference type="ChEBI" id="CHEBI:37565"/>
    </ligand>
</feature>
<organism>
    <name type="scientific">Streptococcus pneumoniae (strain Taiwan19F-14)</name>
    <dbReference type="NCBI Taxonomy" id="487213"/>
    <lineage>
        <taxon>Bacteria</taxon>
        <taxon>Bacillati</taxon>
        <taxon>Bacillota</taxon>
        <taxon>Bacilli</taxon>
        <taxon>Lactobacillales</taxon>
        <taxon>Streptococcaceae</taxon>
        <taxon>Streptococcus</taxon>
    </lineage>
</organism>
<sequence length="930" mass="102907">MSKKRLYEIAKELGKESKEVVARAKELGLDVKSHSSSVEEAVAAKIAASFKPAAAPKVEAKPAAPKVSAEKKAEKSEPAKPAVAKEEAKPAEPVAPKTEKVAAKPQSRNFKAEREARAKEQAERRKQNKGNNRDQQQNGNRQKNDGRNGGKQGQSNRDNRRFNDQAKKQQGQQKRRNERRQQEDKRSNQAAPRIDFKARAAALKAEQNAEYARSSEERFKQYQAAKEALAQANKRKEPEEIFEEAAKLAEQAQQVQAVVEVVPEKKEPAVDTRRKKQARPDKNRDDYDHEEDGPRKQQKNRSSQNQVRNQKNSNWNNNKKNKKGNNKNNRNQTPKPVTERKFHELPTEFEYTDGMTVAEIAKRIKREPAEIVKKLFMMGVMATQNQSLDGETIELLMVDYGIEAKQKVEVDNADIERFFVEDGYLNEDELVERPPVVTIMGHVDHGKTTLLDTLRNSRVATGEAGGITQHIGAYQIVENGKKITFLDTPGHAAFTSMRARGASVTDITILVVAADDGVMPQTIEAINHSKAANVPIIVAINKIDKPGANPERVIGELAEHGVMSTAWGGDSEFVEISAKFNQNIEELLETVLLVAEIQELKADPTVRAIGTVIEARLDKGKGAVATLLVQQGTLNVQDPIVVGNTFGRVRAMTNDLGRRVKVAGPSTPVSITGLNEAPMAGDHFAVYEDEKSARAAGEERAKRALMKQRQATQRVSLENLFDTLKAGELKSVNVIIKADVQGSVEALSASLQKIDVEGVKVTIVHSAVGAINESDVTLAEASNAFIVGFNVRPTPQARQQAEADDVEIRLHSIIYKVIEEMEEAMKGMLDPEFEEKVIGEAVIRETFKVSKVGTIGGFMVINGKVARDSKVRVIRDGVVIYDGELASLKHYKDDVKEVTNGREGGLMIDGYNDIKMDDVIEAYVMEEIKR</sequence>